<protein>
    <recommendedName>
        <fullName evidence="1">Adenylosuccinate synthetase</fullName>
        <shortName evidence="1">AMPSase</shortName>
        <shortName evidence="1">AdSS</shortName>
        <ecNumber evidence="1">6.3.4.4</ecNumber>
    </recommendedName>
    <alternativeName>
        <fullName evidence="1">IMP--aspartate ligase</fullName>
    </alternativeName>
</protein>
<evidence type="ECO:0000255" key="1">
    <source>
        <dbReference type="HAMAP-Rule" id="MF_00011"/>
    </source>
</evidence>
<proteinExistence type="inferred from homology"/>
<reference key="1">
    <citation type="journal article" date="2011" name="MBio">
        <title>Novel metabolic attributes of the genus Cyanothece, comprising a group of unicellular nitrogen-fixing Cyanobacteria.</title>
        <authorList>
            <person name="Bandyopadhyay A."/>
            <person name="Elvitigala T."/>
            <person name="Welsh E."/>
            <person name="Stockel J."/>
            <person name="Liberton M."/>
            <person name="Min H."/>
            <person name="Sherman L.A."/>
            <person name="Pakrasi H.B."/>
        </authorList>
    </citation>
    <scope>NUCLEOTIDE SEQUENCE [LARGE SCALE GENOMIC DNA]</scope>
    <source>
        <strain>PCC 7425 / ATCC 29141</strain>
    </source>
</reference>
<dbReference type="EC" id="6.3.4.4" evidence="1"/>
<dbReference type="EMBL" id="CP001344">
    <property type="protein sequence ID" value="ACL44889.1"/>
    <property type="molecule type" value="Genomic_DNA"/>
</dbReference>
<dbReference type="SMR" id="B8HY86"/>
<dbReference type="STRING" id="395961.Cyan7425_2532"/>
<dbReference type="KEGG" id="cyn:Cyan7425_2532"/>
<dbReference type="eggNOG" id="COG0104">
    <property type="taxonomic scope" value="Bacteria"/>
</dbReference>
<dbReference type="HOGENOM" id="CLU_029848_0_0_3"/>
<dbReference type="OrthoDB" id="9807553at2"/>
<dbReference type="UniPathway" id="UPA00075">
    <property type="reaction ID" value="UER00335"/>
</dbReference>
<dbReference type="GO" id="GO:0005737">
    <property type="term" value="C:cytoplasm"/>
    <property type="evidence" value="ECO:0007669"/>
    <property type="project" value="UniProtKB-SubCell"/>
</dbReference>
<dbReference type="GO" id="GO:0004019">
    <property type="term" value="F:adenylosuccinate synthase activity"/>
    <property type="evidence" value="ECO:0007669"/>
    <property type="project" value="UniProtKB-UniRule"/>
</dbReference>
<dbReference type="GO" id="GO:0005525">
    <property type="term" value="F:GTP binding"/>
    <property type="evidence" value="ECO:0007669"/>
    <property type="project" value="UniProtKB-UniRule"/>
</dbReference>
<dbReference type="GO" id="GO:0000287">
    <property type="term" value="F:magnesium ion binding"/>
    <property type="evidence" value="ECO:0007669"/>
    <property type="project" value="UniProtKB-UniRule"/>
</dbReference>
<dbReference type="GO" id="GO:0044208">
    <property type="term" value="P:'de novo' AMP biosynthetic process"/>
    <property type="evidence" value="ECO:0007669"/>
    <property type="project" value="UniProtKB-UniRule"/>
</dbReference>
<dbReference type="GO" id="GO:0046040">
    <property type="term" value="P:IMP metabolic process"/>
    <property type="evidence" value="ECO:0007669"/>
    <property type="project" value="TreeGrafter"/>
</dbReference>
<dbReference type="CDD" id="cd03108">
    <property type="entry name" value="AdSS"/>
    <property type="match status" value="1"/>
</dbReference>
<dbReference type="FunFam" id="1.10.300.10:FF:000001">
    <property type="entry name" value="Adenylosuccinate synthetase"/>
    <property type="match status" value="1"/>
</dbReference>
<dbReference type="FunFam" id="3.90.170.10:FF:000001">
    <property type="entry name" value="Adenylosuccinate synthetase"/>
    <property type="match status" value="1"/>
</dbReference>
<dbReference type="Gene3D" id="3.40.440.10">
    <property type="entry name" value="Adenylosuccinate Synthetase, subunit A, domain 1"/>
    <property type="match status" value="1"/>
</dbReference>
<dbReference type="Gene3D" id="1.10.300.10">
    <property type="entry name" value="Adenylosuccinate Synthetase, subunit A, domain 2"/>
    <property type="match status" value="1"/>
</dbReference>
<dbReference type="Gene3D" id="3.90.170.10">
    <property type="entry name" value="Adenylosuccinate Synthetase, subunit A, domain 3"/>
    <property type="match status" value="1"/>
</dbReference>
<dbReference type="HAMAP" id="MF_00011">
    <property type="entry name" value="Adenylosucc_synth"/>
    <property type="match status" value="1"/>
</dbReference>
<dbReference type="InterPro" id="IPR018220">
    <property type="entry name" value="Adenylosuccin_syn_GTP-bd"/>
</dbReference>
<dbReference type="InterPro" id="IPR033128">
    <property type="entry name" value="Adenylosuccin_syn_Lys_AS"/>
</dbReference>
<dbReference type="InterPro" id="IPR042109">
    <property type="entry name" value="Adenylosuccinate_synth_dom1"/>
</dbReference>
<dbReference type="InterPro" id="IPR042110">
    <property type="entry name" value="Adenylosuccinate_synth_dom2"/>
</dbReference>
<dbReference type="InterPro" id="IPR042111">
    <property type="entry name" value="Adenylosuccinate_synth_dom3"/>
</dbReference>
<dbReference type="InterPro" id="IPR001114">
    <property type="entry name" value="Adenylosuccinate_synthetase"/>
</dbReference>
<dbReference type="InterPro" id="IPR027417">
    <property type="entry name" value="P-loop_NTPase"/>
</dbReference>
<dbReference type="NCBIfam" id="NF002223">
    <property type="entry name" value="PRK01117.1"/>
    <property type="match status" value="1"/>
</dbReference>
<dbReference type="NCBIfam" id="TIGR00184">
    <property type="entry name" value="purA"/>
    <property type="match status" value="1"/>
</dbReference>
<dbReference type="PANTHER" id="PTHR11846">
    <property type="entry name" value="ADENYLOSUCCINATE SYNTHETASE"/>
    <property type="match status" value="1"/>
</dbReference>
<dbReference type="PANTHER" id="PTHR11846:SF0">
    <property type="entry name" value="ADENYLOSUCCINATE SYNTHETASE"/>
    <property type="match status" value="1"/>
</dbReference>
<dbReference type="Pfam" id="PF00709">
    <property type="entry name" value="Adenylsucc_synt"/>
    <property type="match status" value="1"/>
</dbReference>
<dbReference type="SMART" id="SM00788">
    <property type="entry name" value="Adenylsucc_synt"/>
    <property type="match status" value="1"/>
</dbReference>
<dbReference type="SUPFAM" id="SSF52540">
    <property type="entry name" value="P-loop containing nucleoside triphosphate hydrolases"/>
    <property type="match status" value="1"/>
</dbReference>
<dbReference type="PROSITE" id="PS01266">
    <property type="entry name" value="ADENYLOSUCCIN_SYN_1"/>
    <property type="match status" value="1"/>
</dbReference>
<dbReference type="PROSITE" id="PS00513">
    <property type="entry name" value="ADENYLOSUCCIN_SYN_2"/>
    <property type="match status" value="1"/>
</dbReference>
<feature type="chain" id="PRO_1000194744" description="Adenylosuccinate synthetase">
    <location>
        <begin position="1"/>
        <end position="445"/>
    </location>
</feature>
<feature type="active site" description="Proton acceptor" evidence="1">
    <location>
        <position position="13"/>
    </location>
</feature>
<feature type="active site" description="Proton donor" evidence="1">
    <location>
        <position position="41"/>
    </location>
</feature>
<feature type="binding site" evidence="1">
    <location>
        <begin position="12"/>
        <end position="18"/>
    </location>
    <ligand>
        <name>GTP</name>
        <dbReference type="ChEBI" id="CHEBI:37565"/>
    </ligand>
</feature>
<feature type="binding site" description="in other chain" evidence="1">
    <location>
        <begin position="13"/>
        <end position="16"/>
    </location>
    <ligand>
        <name>IMP</name>
        <dbReference type="ChEBI" id="CHEBI:58053"/>
        <note>ligand shared between dimeric partners</note>
    </ligand>
</feature>
<feature type="binding site" evidence="1">
    <location>
        <position position="13"/>
    </location>
    <ligand>
        <name>Mg(2+)</name>
        <dbReference type="ChEBI" id="CHEBI:18420"/>
    </ligand>
</feature>
<feature type="binding site" description="in other chain" evidence="1">
    <location>
        <begin position="38"/>
        <end position="41"/>
    </location>
    <ligand>
        <name>IMP</name>
        <dbReference type="ChEBI" id="CHEBI:58053"/>
        <note>ligand shared between dimeric partners</note>
    </ligand>
</feature>
<feature type="binding site" evidence="1">
    <location>
        <begin position="40"/>
        <end position="42"/>
    </location>
    <ligand>
        <name>GTP</name>
        <dbReference type="ChEBI" id="CHEBI:37565"/>
    </ligand>
</feature>
<feature type="binding site" evidence="1">
    <location>
        <position position="40"/>
    </location>
    <ligand>
        <name>Mg(2+)</name>
        <dbReference type="ChEBI" id="CHEBI:18420"/>
    </ligand>
</feature>
<feature type="binding site" description="in other chain" evidence="1">
    <location>
        <position position="128"/>
    </location>
    <ligand>
        <name>IMP</name>
        <dbReference type="ChEBI" id="CHEBI:58053"/>
        <note>ligand shared between dimeric partners</note>
    </ligand>
</feature>
<feature type="binding site" evidence="1">
    <location>
        <position position="142"/>
    </location>
    <ligand>
        <name>IMP</name>
        <dbReference type="ChEBI" id="CHEBI:58053"/>
        <note>ligand shared between dimeric partners</note>
    </ligand>
</feature>
<feature type="binding site" description="in other chain" evidence="1">
    <location>
        <position position="223"/>
    </location>
    <ligand>
        <name>IMP</name>
        <dbReference type="ChEBI" id="CHEBI:58053"/>
        <note>ligand shared between dimeric partners</note>
    </ligand>
</feature>
<feature type="binding site" description="in other chain" evidence="1">
    <location>
        <position position="238"/>
    </location>
    <ligand>
        <name>IMP</name>
        <dbReference type="ChEBI" id="CHEBI:58053"/>
        <note>ligand shared between dimeric partners</note>
    </ligand>
</feature>
<feature type="binding site" evidence="1">
    <location>
        <begin position="298"/>
        <end position="304"/>
    </location>
    <ligand>
        <name>substrate</name>
    </ligand>
</feature>
<feature type="binding site" description="in other chain" evidence="1">
    <location>
        <position position="302"/>
    </location>
    <ligand>
        <name>IMP</name>
        <dbReference type="ChEBI" id="CHEBI:58053"/>
        <note>ligand shared between dimeric partners</note>
    </ligand>
</feature>
<feature type="binding site" evidence="1">
    <location>
        <position position="304"/>
    </location>
    <ligand>
        <name>GTP</name>
        <dbReference type="ChEBI" id="CHEBI:37565"/>
    </ligand>
</feature>
<feature type="binding site" evidence="1">
    <location>
        <begin position="330"/>
        <end position="332"/>
    </location>
    <ligand>
        <name>GTP</name>
        <dbReference type="ChEBI" id="CHEBI:37565"/>
    </ligand>
</feature>
<feature type="binding site" evidence="1">
    <location>
        <begin position="411"/>
        <end position="413"/>
    </location>
    <ligand>
        <name>GTP</name>
        <dbReference type="ChEBI" id="CHEBI:37565"/>
    </ligand>
</feature>
<organism>
    <name type="scientific">Cyanothece sp. (strain PCC 7425 / ATCC 29141)</name>
    <dbReference type="NCBI Taxonomy" id="395961"/>
    <lineage>
        <taxon>Bacteria</taxon>
        <taxon>Bacillati</taxon>
        <taxon>Cyanobacteriota</taxon>
        <taxon>Cyanophyceae</taxon>
        <taxon>Gomontiellales</taxon>
        <taxon>Cyanothecaceae</taxon>
        <taxon>Cyanothece</taxon>
    </lineage>
</organism>
<name>PURA_CYAP4</name>
<accession>B8HY86</accession>
<keyword id="KW-0963">Cytoplasm</keyword>
<keyword id="KW-0342">GTP-binding</keyword>
<keyword id="KW-0436">Ligase</keyword>
<keyword id="KW-0460">Magnesium</keyword>
<keyword id="KW-0479">Metal-binding</keyword>
<keyword id="KW-0547">Nucleotide-binding</keyword>
<keyword id="KW-0658">Purine biosynthesis</keyword>
<sequence length="445" mass="48729">MANVVVIGAQWGDEGKGKITDLLSKSADVVVRYQGGVNAGHTVVVNGQTLKLHLIPSGILYPDTECIIGSGTVIDPEVLIQELDQLKLLGVSTANLLISETAHVTMPYHRLIDRAAEELRGSHRIGTTGRGIGPTYADKSERTGIRILDLMDATTLQEQLRWAVNHKNVLLEKMYGLPPYDPAEIIAEYLTYAERLRPHVVDCSLKISDAVRRRRNILFEGAQGTLLDLDHGTYPYVTSSNPVAGGACVGAGVGPTMIDRVIGVAKAYTTRVGEGPFPTELTDQLGELLCDRGAEFGTTTGRKRRCGWFDAVIGRYAVRINGLDCLAITKLDVLDQLDEIKVCVAYEIDGERCEDFPNARRFARCQPIYETLPGWKQPTDHCRSLEDLPPQALNYLKFLAEIMEVPIAIVSLGAERHQTIIVEDPIHGPKRALLPASPVPVPKIA</sequence>
<comment type="function">
    <text evidence="1">Plays an important role in the de novo pathway of purine nucleotide biosynthesis. Catalyzes the first committed step in the biosynthesis of AMP from IMP.</text>
</comment>
<comment type="catalytic activity">
    <reaction evidence="1">
        <text>IMP + L-aspartate + GTP = N(6)-(1,2-dicarboxyethyl)-AMP + GDP + phosphate + 2 H(+)</text>
        <dbReference type="Rhea" id="RHEA:15753"/>
        <dbReference type="ChEBI" id="CHEBI:15378"/>
        <dbReference type="ChEBI" id="CHEBI:29991"/>
        <dbReference type="ChEBI" id="CHEBI:37565"/>
        <dbReference type="ChEBI" id="CHEBI:43474"/>
        <dbReference type="ChEBI" id="CHEBI:57567"/>
        <dbReference type="ChEBI" id="CHEBI:58053"/>
        <dbReference type="ChEBI" id="CHEBI:58189"/>
        <dbReference type="EC" id="6.3.4.4"/>
    </reaction>
</comment>
<comment type="cofactor">
    <cofactor evidence="1">
        <name>Mg(2+)</name>
        <dbReference type="ChEBI" id="CHEBI:18420"/>
    </cofactor>
    <text evidence="1">Binds 1 Mg(2+) ion per subunit.</text>
</comment>
<comment type="pathway">
    <text evidence="1">Purine metabolism; AMP biosynthesis via de novo pathway; AMP from IMP: step 1/2.</text>
</comment>
<comment type="subunit">
    <text evidence="1">Homodimer.</text>
</comment>
<comment type="subcellular location">
    <subcellularLocation>
        <location evidence="1">Cytoplasm</location>
    </subcellularLocation>
</comment>
<comment type="similarity">
    <text evidence="1">Belongs to the adenylosuccinate synthetase family.</text>
</comment>
<gene>
    <name evidence="1" type="primary">purA</name>
    <name type="ordered locus">Cyan7425_2532</name>
</gene>